<organism>
    <name type="scientific">Actinobacillus pleuropneumoniae serotype 7 (strain AP76)</name>
    <dbReference type="NCBI Taxonomy" id="537457"/>
    <lineage>
        <taxon>Bacteria</taxon>
        <taxon>Pseudomonadati</taxon>
        <taxon>Pseudomonadota</taxon>
        <taxon>Gammaproteobacteria</taxon>
        <taxon>Pasteurellales</taxon>
        <taxon>Pasteurellaceae</taxon>
        <taxon>Actinobacillus</taxon>
    </lineage>
</organism>
<reference key="1">
    <citation type="submission" date="2008-06" db="EMBL/GenBank/DDBJ databases">
        <title>Genome and proteome analysis of A. pleuropneumoniae serotype 7.</title>
        <authorList>
            <person name="Linke B."/>
            <person name="Buettner F."/>
            <person name="Martinez-Arias R."/>
            <person name="Goesmann A."/>
            <person name="Baltes N."/>
            <person name="Tegetmeyer H."/>
            <person name="Singh M."/>
            <person name="Gerlach G.F."/>
        </authorList>
    </citation>
    <scope>NUCLEOTIDE SEQUENCE [LARGE SCALE GENOMIC DNA]</scope>
    <source>
        <strain>AP76</strain>
    </source>
</reference>
<dbReference type="EC" id="2.8.4.3" evidence="1"/>
<dbReference type="EMBL" id="CP001091">
    <property type="protein sequence ID" value="ACE62028.1"/>
    <property type="molecule type" value="Genomic_DNA"/>
</dbReference>
<dbReference type="RefSeq" id="WP_005617789.1">
    <property type="nucleotide sequence ID" value="NC_010939.1"/>
</dbReference>
<dbReference type="SMR" id="B3GYA4"/>
<dbReference type="KEGG" id="apa:APP7_1376"/>
<dbReference type="HOGENOM" id="CLU_018697_2_0_6"/>
<dbReference type="Proteomes" id="UP000001226">
    <property type="component" value="Chromosome"/>
</dbReference>
<dbReference type="GO" id="GO:0005829">
    <property type="term" value="C:cytosol"/>
    <property type="evidence" value="ECO:0007669"/>
    <property type="project" value="TreeGrafter"/>
</dbReference>
<dbReference type="GO" id="GO:0051539">
    <property type="term" value="F:4 iron, 4 sulfur cluster binding"/>
    <property type="evidence" value="ECO:0007669"/>
    <property type="project" value="UniProtKB-UniRule"/>
</dbReference>
<dbReference type="GO" id="GO:0046872">
    <property type="term" value="F:metal ion binding"/>
    <property type="evidence" value="ECO:0007669"/>
    <property type="project" value="UniProtKB-KW"/>
</dbReference>
<dbReference type="GO" id="GO:0035597">
    <property type="term" value="F:N6-isopentenyladenosine methylthiotransferase activity"/>
    <property type="evidence" value="ECO:0007669"/>
    <property type="project" value="TreeGrafter"/>
</dbReference>
<dbReference type="CDD" id="cd01335">
    <property type="entry name" value="Radical_SAM"/>
    <property type="match status" value="1"/>
</dbReference>
<dbReference type="FunFam" id="3.40.50.12160:FF:000001">
    <property type="entry name" value="tRNA-2-methylthio-N(6)-dimethylallyladenosine synthase"/>
    <property type="match status" value="1"/>
</dbReference>
<dbReference type="FunFam" id="3.80.30.20:FF:000001">
    <property type="entry name" value="tRNA-2-methylthio-N(6)-dimethylallyladenosine synthase 2"/>
    <property type="match status" value="1"/>
</dbReference>
<dbReference type="Gene3D" id="3.40.50.12160">
    <property type="entry name" value="Methylthiotransferase, N-terminal domain"/>
    <property type="match status" value="1"/>
</dbReference>
<dbReference type="Gene3D" id="3.80.30.20">
    <property type="entry name" value="tm_1862 like domain"/>
    <property type="match status" value="1"/>
</dbReference>
<dbReference type="HAMAP" id="MF_01864">
    <property type="entry name" value="tRNA_metthiotr_MiaB"/>
    <property type="match status" value="1"/>
</dbReference>
<dbReference type="InterPro" id="IPR006638">
    <property type="entry name" value="Elp3/MiaA/NifB-like_rSAM"/>
</dbReference>
<dbReference type="InterPro" id="IPR005839">
    <property type="entry name" value="Methylthiotransferase"/>
</dbReference>
<dbReference type="InterPro" id="IPR020612">
    <property type="entry name" value="Methylthiotransferase_CS"/>
</dbReference>
<dbReference type="InterPro" id="IPR013848">
    <property type="entry name" value="Methylthiotransferase_N"/>
</dbReference>
<dbReference type="InterPro" id="IPR038135">
    <property type="entry name" value="Methylthiotransferase_N_sf"/>
</dbReference>
<dbReference type="InterPro" id="IPR006463">
    <property type="entry name" value="MiaB_methiolase"/>
</dbReference>
<dbReference type="InterPro" id="IPR007197">
    <property type="entry name" value="rSAM"/>
</dbReference>
<dbReference type="InterPro" id="IPR023404">
    <property type="entry name" value="rSAM_horseshoe"/>
</dbReference>
<dbReference type="InterPro" id="IPR002792">
    <property type="entry name" value="TRAM_dom"/>
</dbReference>
<dbReference type="NCBIfam" id="TIGR01574">
    <property type="entry name" value="miaB-methiolase"/>
    <property type="match status" value="1"/>
</dbReference>
<dbReference type="NCBIfam" id="TIGR00089">
    <property type="entry name" value="MiaB/RimO family radical SAM methylthiotransferase"/>
    <property type="match status" value="1"/>
</dbReference>
<dbReference type="PANTHER" id="PTHR43020">
    <property type="entry name" value="CDK5 REGULATORY SUBUNIT-ASSOCIATED PROTEIN 1"/>
    <property type="match status" value="1"/>
</dbReference>
<dbReference type="PANTHER" id="PTHR43020:SF2">
    <property type="entry name" value="MITOCHONDRIAL TRNA METHYLTHIOTRANSFERASE CDK5RAP1"/>
    <property type="match status" value="1"/>
</dbReference>
<dbReference type="Pfam" id="PF04055">
    <property type="entry name" value="Radical_SAM"/>
    <property type="match status" value="1"/>
</dbReference>
<dbReference type="Pfam" id="PF01938">
    <property type="entry name" value="TRAM"/>
    <property type="match status" value="1"/>
</dbReference>
<dbReference type="Pfam" id="PF00919">
    <property type="entry name" value="UPF0004"/>
    <property type="match status" value="1"/>
</dbReference>
<dbReference type="SFLD" id="SFLDF00273">
    <property type="entry name" value="(dimethylallyl)adenosine_tRNA"/>
    <property type="match status" value="1"/>
</dbReference>
<dbReference type="SFLD" id="SFLDG01082">
    <property type="entry name" value="B12-binding_domain_containing"/>
    <property type="match status" value="1"/>
</dbReference>
<dbReference type="SFLD" id="SFLDS00029">
    <property type="entry name" value="Radical_SAM"/>
    <property type="match status" value="1"/>
</dbReference>
<dbReference type="SMART" id="SM00729">
    <property type="entry name" value="Elp3"/>
    <property type="match status" value="1"/>
</dbReference>
<dbReference type="SUPFAM" id="SSF102114">
    <property type="entry name" value="Radical SAM enzymes"/>
    <property type="match status" value="1"/>
</dbReference>
<dbReference type="PROSITE" id="PS51449">
    <property type="entry name" value="MTTASE_N"/>
    <property type="match status" value="1"/>
</dbReference>
<dbReference type="PROSITE" id="PS01278">
    <property type="entry name" value="MTTASE_RADICAL"/>
    <property type="match status" value="1"/>
</dbReference>
<dbReference type="PROSITE" id="PS51918">
    <property type="entry name" value="RADICAL_SAM"/>
    <property type="match status" value="1"/>
</dbReference>
<dbReference type="PROSITE" id="PS50926">
    <property type="entry name" value="TRAM"/>
    <property type="match status" value="1"/>
</dbReference>
<sequence>MAKLHITTWGCQMNEYDSSKMADLLNSTHGLELTDKPEEADVLLLNTCSIREKAQEKVFSQLGRWKNWKKDKPDLIIGVGGCVASQEGEHIRDRAPFVDIVFGPQTLHRLPEMINKIRGGDRAIVDISFPEIEKFDRLPEPRAEGPTAFVSIMEGCNKYCSFCVVPYTRGEEVSRPVDDVLFEIAQLAEQGVREVNLLGQNVNAYRGETFDGGICTFAELLRLVAAIDGIDRVRYTTSHPIEFTDDIIEVYRDTPELVSFLHLPIQSGADRVLTMMKRNHTALEYKAIIRKLREVRPNIQISSDFIVGFPGETAEDFEQTMKVIEQVNFDMSFSFIYSARPGTPAADLPDDISEEEKKERLARLQQRINHQAMQFSRAMLGTEQRVLVEGPSKKDIMELTGRTENNRIVNFQGTPDMIGKFVDIKITDVYTNSLRGDVVRTEDEMGLRVVESAASVIARTRKEDDLGVGKYVVNL</sequence>
<accession>B3GYA4</accession>
<evidence type="ECO:0000255" key="1">
    <source>
        <dbReference type="HAMAP-Rule" id="MF_01864"/>
    </source>
</evidence>
<evidence type="ECO:0000255" key="2">
    <source>
        <dbReference type="PROSITE-ProRule" id="PRU01266"/>
    </source>
</evidence>
<gene>
    <name evidence="1" type="primary">miaB</name>
    <name type="ordered locus">APP7_1376</name>
</gene>
<protein>
    <recommendedName>
        <fullName evidence="1">tRNA-2-methylthio-N(6)-dimethylallyladenosine synthase</fullName>
        <ecNumber evidence="1">2.8.4.3</ecNumber>
    </recommendedName>
    <alternativeName>
        <fullName evidence="1">(Dimethylallyl)adenosine tRNA methylthiotransferase MiaB</fullName>
    </alternativeName>
    <alternativeName>
        <fullName evidence="1">tRNA-i(6)A37 methylthiotransferase</fullName>
    </alternativeName>
</protein>
<comment type="function">
    <text evidence="1">Catalyzes the methylthiolation of N6-(dimethylallyl)adenosine (i(6)A), leading to the formation of 2-methylthio-N6-(dimethylallyl)adenosine (ms(2)i(6)A) at position 37 in tRNAs that read codons beginning with uridine.</text>
</comment>
<comment type="catalytic activity">
    <reaction evidence="1">
        <text>N(6)-dimethylallyladenosine(37) in tRNA + (sulfur carrier)-SH + AH2 + 2 S-adenosyl-L-methionine = 2-methylsulfanyl-N(6)-dimethylallyladenosine(37) in tRNA + (sulfur carrier)-H + 5'-deoxyadenosine + L-methionine + A + S-adenosyl-L-homocysteine + 2 H(+)</text>
        <dbReference type="Rhea" id="RHEA:37067"/>
        <dbReference type="Rhea" id="RHEA-COMP:10375"/>
        <dbReference type="Rhea" id="RHEA-COMP:10376"/>
        <dbReference type="Rhea" id="RHEA-COMP:14737"/>
        <dbReference type="Rhea" id="RHEA-COMP:14739"/>
        <dbReference type="ChEBI" id="CHEBI:13193"/>
        <dbReference type="ChEBI" id="CHEBI:15378"/>
        <dbReference type="ChEBI" id="CHEBI:17319"/>
        <dbReference type="ChEBI" id="CHEBI:17499"/>
        <dbReference type="ChEBI" id="CHEBI:29917"/>
        <dbReference type="ChEBI" id="CHEBI:57844"/>
        <dbReference type="ChEBI" id="CHEBI:57856"/>
        <dbReference type="ChEBI" id="CHEBI:59789"/>
        <dbReference type="ChEBI" id="CHEBI:64428"/>
        <dbReference type="ChEBI" id="CHEBI:74415"/>
        <dbReference type="ChEBI" id="CHEBI:74417"/>
        <dbReference type="EC" id="2.8.4.3"/>
    </reaction>
</comment>
<comment type="cofactor">
    <cofactor evidence="1">
        <name>[4Fe-4S] cluster</name>
        <dbReference type="ChEBI" id="CHEBI:49883"/>
    </cofactor>
    <text evidence="1">Binds 2 [4Fe-4S] clusters. One cluster is coordinated with 3 cysteines and an exchangeable S-adenosyl-L-methionine.</text>
</comment>
<comment type="subunit">
    <text evidence="1">Monomer.</text>
</comment>
<comment type="subcellular location">
    <subcellularLocation>
        <location evidence="1">Cytoplasm</location>
    </subcellularLocation>
</comment>
<comment type="similarity">
    <text evidence="1">Belongs to the methylthiotransferase family. MiaB subfamily.</text>
</comment>
<proteinExistence type="inferred from homology"/>
<name>MIAB_ACTP7</name>
<feature type="chain" id="PRO_0000374095" description="tRNA-2-methylthio-N(6)-dimethylallyladenosine synthase">
    <location>
        <begin position="1"/>
        <end position="475"/>
    </location>
</feature>
<feature type="domain" description="MTTase N-terminal" evidence="1">
    <location>
        <begin position="2"/>
        <end position="119"/>
    </location>
</feature>
<feature type="domain" description="Radical SAM core" evidence="2">
    <location>
        <begin position="142"/>
        <end position="374"/>
    </location>
</feature>
<feature type="domain" description="TRAM" evidence="1">
    <location>
        <begin position="377"/>
        <end position="440"/>
    </location>
</feature>
<feature type="binding site" evidence="1">
    <location>
        <position position="11"/>
    </location>
    <ligand>
        <name>[4Fe-4S] cluster</name>
        <dbReference type="ChEBI" id="CHEBI:49883"/>
        <label>1</label>
    </ligand>
</feature>
<feature type="binding site" evidence="1">
    <location>
        <position position="48"/>
    </location>
    <ligand>
        <name>[4Fe-4S] cluster</name>
        <dbReference type="ChEBI" id="CHEBI:49883"/>
        <label>1</label>
    </ligand>
</feature>
<feature type="binding site" evidence="1">
    <location>
        <position position="82"/>
    </location>
    <ligand>
        <name>[4Fe-4S] cluster</name>
        <dbReference type="ChEBI" id="CHEBI:49883"/>
        <label>1</label>
    </ligand>
</feature>
<feature type="binding site" evidence="1">
    <location>
        <position position="156"/>
    </location>
    <ligand>
        <name>[4Fe-4S] cluster</name>
        <dbReference type="ChEBI" id="CHEBI:49883"/>
        <label>2</label>
        <note>4Fe-4S-S-AdoMet</note>
    </ligand>
</feature>
<feature type="binding site" evidence="1">
    <location>
        <position position="160"/>
    </location>
    <ligand>
        <name>[4Fe-4S] cluster</name>
        <dbReference type="ChEBI" id="CHEBI:49883"/>
        <label>2</label>
        <note>4Fe-4S-S-AdoMet</note>
    </ligand>
</feature>
<feature type="binding site" evidence="1">
    <location>
        <position position="163"/>
    </location>
    <ligand>
        <name>[4Fe-4S] cluster</name>
        <dbReference type="ChEBI" id="CHEBI:49883"/>
        <label>2</label>
        <note>4Fe-4S-S-AdoMet</note>
    </ligand>
</feature>
<keyword id="KW-0004">4Fe-4S</keyword>
<keyword id="KW-0963">Cytoplasm</keyword>
<keyword id="KW-0408">Iron</keyword>
<keyword id="KW-0411">Iron-sulfur</keyword>
<keyword id="KW-0479">Metal-binding</keyword>
<keyword id="KW-0949">S-adenosyl-L-methionine</keyword>
<keyword id="KW-0808">Transferase</keyword>
<keyword id="KW-0819">tRNA processing</keyword>